<dbReference type="EC" id="2.1.1.77" evidence="1"/>
<dbReference type="EMBL" id="CP000720">
    <property type="protein sequence ID" value="ABS48728.1"/>
    <property type="molecule type" value="Genomic_DNA"/>
</dbReference>
<dbReference type="RefSeq" id="WP_002209395.1">
    <property type="nucleotide sequence ID" value="NC_009708.1"/>
</dbReference>
<dbReference type="SMR" id="A7FLX4"/>
<dbReference type="KEGG" id="ypi:YpsIP31758_3295"/>
<dbReference type="HOGENOM" id="CLU_055432_2_0_6"/>
<dbReference type="Proteomes" id="UP000002412">
    <property type="component" value="Chromosome"/>
</dbReference>
<dbReference type="GO" id="GO:0005737">
    <property type="term" value="C:cytoplasm"/>
    <property type="evidence" value="ECO:0007669"/>
    <property type="project" value="UniProtKB-SubCell"/>
</dbReference>
<dbReference type="GO" id="GO:0004719">
    <property type="term" value="F:protein-L-isoaspartate (D-aspartate) O-methyltransferase activity"/>
    <property type="evidence" value="ECO:0007669"/>
    <property type="project" value="UniProtKB-UniRule"/>
</dbReference>
<dbReference type="GO" id="GO:0032259">
    <property type="term" value="P:methylation"/>
    <property type="evidence" value="ECO:0007669"/>
    <property type="project" value="UniProtKB-KW"/>
</dbReference>
<dbReference type="GO" id="GO:0036211">
    <property type="term" value="P:protein modification process"/>
    <property type="evidence" value="ECO:0007669"/>
    <property type="project" value="UniProtKB-UniRule"/>
</dbReference>
<dbReference type="GO" id="GO:0030091">
    <property type="term" value="P:protein repair"/>
    <property type="evidence" value="ECO:0007669"/>
    <property type="project" value="UniProtKB-UniRule"/>
</dbReference>
<dbReference type="CDD" id="cd02440">
    <property type="entry name" value="AdoMet_MTases"/>
    <property type="match status" value="1"/>
</dbReference>
<dbReference type="FunFam" id="3.40.50.150:FF:000010">
    <property type="entry name" value="Protein-L-isoaspartate O-methyltransferase"/>
    <property type="match status" value="1"/>
</dbReference>
<dbReference type="Gene3D" id="3.40.50.150">
    <property type="entry name" value="Vaccinia Virus protein VP39"/>
    <property type="match status" value="1"/>
</dbReference>
<dbReference type="HAMAP" id="MF_00090">
    <property type="entry name" value="PIMT"/>
    <property type="match status" value="1"/>
</dbReference>
<dbReference type="InterPro" id="IPR000682">
    <property type="entry name" value="PCMT"/>
</dbReference>
<dbReference type="InterPro" id="IPR029063">
    <property type="entry name" value="SAM-dependent_MTases_sf"/>
</dbReference>
<dbReference type="NCBIfam" id="TIGR00080">
    <property type="entry name" value="pimt"/>
    <property type="match status" value="1"/>
</dbReference>
<dbReference type="NCBIfam" id="NF001453">
    <property type="entry name" value="PRK00312.1"/>
    <property type="match status" value="1"/>
</dbReference>
<dbReference type="PANTHER" id="PTHR11579">
    <property type="entry name" value="PROTEIN-L-ISOASPARTATE O-METHYLTRANSFERASE"/>
    <property type="match status" value="1"/>
</dbReference>
<dbReference type="PANTHER" id="PTHR11579:SF0">
    <property type="entry name" value="PROTEIN-L-ISOASPARTATE(D-ASPARTATE) O-METHYLTRANSFERASE"/>
    <property type="match status" value="1"/>
</dbReference>
<dbReference type="Pfam" id="PF01135">
    <property type="entry name" value="PCMT"/>
    <property type="match status" value="1"/>
</dbReference>
<dbReference type="SUPFAM" id="SSF53335">
    <property type="entry name" value="S-adenosyl-L-methionine-dependent methyltransferases"/>
    <property type="match status" value="1"/>
</dbReference>
<dbReference type="PROSITE" id="PS01279">
    <property type="entry name" value="PCMT"/>
    <property type="match status" value="1"/>
</dbReference>
<name>PIMT_YERP3</name>
<organism>
    <name type="scientific">Yersinia pseudotuberculosis serotype O:1b (strain IP 31758)</name>
    <dbReference type="NCBI Taxonomy" id="349747"/>
    <lineage>
        <taxon>Bacteria</taxon>
        <taxon>Pseudomonadati</taxon>
        <taxon>Pseudomonadota</taxon>
        <taxon>Gammaproteobacteria</taxon>
        <taxon>Enterobacterales</taxon>
        <taxon>Yersiniaceae</taxon>
        <taxon>Yersinia</taxon>
    </lineage>
</organism>
<gene>
    <name evidence="1" type="primary">pcm</name>
    <name type="ordered locus">YpsIP31758_3295</name>
</gene>
<sequence>MVNKRMQTLLMQLRQQGIHDERLLQAIEAVPRERFVDEALAHKAYENTALPIGAGQTISQPYMVARMTELLQLTPTSRVLEIGTGSGYQTAILAHLVDHVCSVERIKGLQWQAKRRLKQLDLHNVSTRHGDGWLGWQSRGPFDAIIVTAAPPEIPDALLEQLDEGGILVLPVGEQFQTLKYVQRRNNEYHIETVEAVRFVPLVKGELA</sequence>
<accession>A7FLX4</accession>
<protein>
    <recommendedName>
        <fullName evidence="1">Protein-L-isoaspartate O-methyltransferase</fullName>
        <ecNumber evidence="1">2.1.1.77</ecNumber>
    </recommendedName>
    <alternativeName>
        <fullName evidence="1">L-isoaspartyl protein carboxyl methyltransferase</fullName>
    </alternativeName>
    <alternativeName>
        <fullName evidence="1">Protein L-isoaspartyl methyltransferase</fullName>
    </alternativeName>
    <alternativeName>
        <fullName evidence="1">Protein-beta-aspartate methyltransferase</fullName>
        <shortName evidence="1">PIMT</shortName>
    </alternativeName>
</protein>
<reference key="1">
    <citation type="journal article" date="2007" name="PLoS Genet.">
        <title>The complete genome sequence of Yersinia pseudotuberculosis IP31758, the causative agent of Far East scarlet-like fever.</title>
        <authorList>
            <person name="Eppinger M."/>
            <person name="Rosovitz M.J."/>
            <person name="Fricke W.F."/>
            <person name="Rasko D.A."/>
            <person name="Kokorina G."/>
            <person name="Fayolle C."/>
            <person name="Lindler L.E."/>
            <person name="Carniel E."/>
            <person name="Ravel J."/>
        </authorList>
    </citation>
    <scope>NUCLEOTIDE SEQUENCE [LARGE SCALE GENOMIC DNA]</scope>
    <source>
        <strain>IP 31758</strain>
    </source>
</reference>
<keyword id="KW-0963">Cytoplasm</keyword>
<keyword id="KW-0489">Methyltransferase</keyword>
<keyword id="KW-0949">S-adenosyl-L-methionine</keyword>
<keyword id="KW-0808">Transferase</keyword>
<evidence type="ECO:0000255" key="1">
    <source>
        <dbReference type="HAMAP-Rule" id="MF_00090"/>
    </source>
</evidence>
<comment type="function">
    <text evidence="1">Catalyzes the methyl esterification of L-isoaspartyl residues in peptides and proteins that result from spontaneous decomposition of normal L-aspartyl and L-asparaginyl residues. It plays a role in the repair and/or degradation of damaged proteins.</text>
</comment>
<comment type="catalytic activity">
    <reaction evidence="1">
        <text>[protein]-L-isoaspartate + S-adenosyl-L-methionine = [protein]-L-isoaspartate alpha-methyl ester + S-adenosyl-L-homocysteine</text>
        <dbReference type="Rhea" id="RHEA:12705"/>
        <dbReference type="Rhea" id="RHEA-COMP:12143"/>
        <dbReference type="Rhea" id="RHEA-COMP:12144"/>
        <dbReference type="ChEBI" id="CHEBI:57856"/>
        <dbReference type="ChEBI" id="CHEBI:59789"/>
        <dbReference type="ChEBI" id="CHEBI:90596"/>
        <dbReference type="ChEBI" id="CHEBI:90598"/>
        <dbReference type="EC" id="2.1.1.77"/>
    </reaction>
</comment>
<comment type="subcellular location">
    <subcellularLocation>
        <location evidence="1">Cytoplasm</location>
    </subcellularLocation>
</comment>
<comment type="similarity">
    <text evidence="1">Belongs to the methyltransferase superfamily. L-isoaspartyl/D-aspartyl protein methyltransferase family.</text>
</comment>
<proteinExistence type="inferred from homology"/>
<feature type="chain" id="PRO_1000057602" description="Protein-L-isoaspartate O-methyltransferase">
    <location>
        <begin position="1"/>
        <end position="208"/>
    </location>
</feature>
<feature type="active site" evidence="1">
    <location>
        <position position="59"/>
    </location>
</feature>